<proteinExistence type="evidence at transcript level"/>
<reference key="1">
    <citation type="submission" date="2005-04" db="EMBL/GenBank/DDBJ databases">
        <authorList>
            <person name="Mimori-Kiyosue Y."/>
            <person name="Akhmanova A."/>
        </authorList>
    </citation>
    <scope>NUCLEOTIDE SEQUENCE [MRNA] (ISOFORM 2)</scope>
</reference>
<reference key="2">
    <citation type="submission" date="2007-03" db="EMBL/GenBank/DDBJ databases">
        <authorList>
            <consortium name="NIH - Xenopus Gene Collection (XGC) project"/>
        </authorList>
    </citation>
    <scope>NUCLEOTIDE SEQUENCE [LARGE SCALE MRNA] (ISOFORM 1)</scope>
    <source>
        <tissue>Oocyte</tissue>
    </source>
</reference>
<reference key="3">
    <citation type="journal article" date="2006" name="J. Cell Biol.">
        <title>Xorbit/CLASP links dynamic microtubules to chromosomes in the Xenopus meiotic spindle.</title>
        <authorList>
            <person name="Hannak E."/>
            <person name="Heald R."/>
        </authorList>
    </citation>
    <scope>IDENTIFICATION</scope>
</reference>
<organism>
    <name type="scientific">Xenopus laevis</name>
    <name type="common">African clawed frog</name>
    <dbReference type="NCBI Taxonomy" id="8355"/>
    <lineage>
        <taxon>Eukaryota</taxon>
        <taxon>Metazoa</taxon>
        <taxon>Chordata</taxon>
        <taxon>Craniata</taxon>
        <taxon>Vertebrata</taxon>
        <taxon>Euteleostomi</taxon>
        <taxon>Amphibia</taxon>
        <taxon>Batrachia</taxon>
        <taxon>Anura</taxon>
        <taxon>Pipoidea</taxon>
        <taxon>Pipidae</taxon>
        <taxon>Xenopodinae</taxon>
        <taxon>Xenopus</taxon>
        <taxon>Xenopus</taxon>
    </lineage>
</organism>
<feature type="chain" id="PRO_0000272275" description="CLIP-associating protein 1-A">
    <location>
        <begin position="1"/>
        <end position="1460"/>
    </location>
</feature>
<feature type="repeat" description="HEAT 1">
    <location>
        <begin position="87"/>
        <end position="124"/>
    </location>
</feature>
<feature type="repeat" description="HEAT 2">
    <location>
        <begin position="163"/>
        <end position="200"/>
    </location>
</feature>
<feature type="repeat" description="HEAT 3">
    <location>
        <begin position="407"/>
        <end position="442"/>
    </location>
</feature>
<feature type="repeat" description="HEAT 4">
    <location>
        <begin position="443"/>
        <end position="479"/>
    </location>
</feature>
<feature type="repeat" description="HEAT 5">
    <location>
        <begin position="942"/>
        <end position="979"/>
    </location>
</feature>
<feature type="repeat" description="HEAT 6">
    <location>
        <begin position="1272"/>
        <end position="1309"/>
    </location>
</feature>
<feature type="repeat" description="HEAT 7">
    <location>
        <begin position="1390"/>
        <end position="1427"/>
    </location>
</feature>
<feature type="region of interest" description="Disordered" evidence="2">
    <location>
        <begin position="237"/>
        <end position="293"/>
    </location>
</feature>
<feature type="region of interest" description="Disordered" evidence="2">
    <location>
        <begin position="545"/>
        <end position="605"/>
    </location>
</feature>
<feature type="region of interest" description="Disordered" evidence="2">
    <location>
        <begin position="640"/>
        <end position="733"/>
    </location>
</feature>
<feature type="region of interest" description="Disordered" evidence="2">
    <location>
        <begin position="778"/>
        <end position="800"/>
    </location>
</feature>
<feature type="region of interest" description="Disordered" evidence="2">
    <location>
        <begin position="1041"/>
        <end position="1084"/>
    </location>
</feature>
<feature type="compositionally biased region" description="Low complexity" evidence="2">
    <location>
        <begin position="279"/>
        <end position="293"/>
    </location>
</feature>
<feature type="compositionally biased region" description="Low complexity" evidence="2">
    <location>
        <begin position="550"/>
        <end position="569"/>
    </location>
</feature>
<feature type="compositionally biased region" description="Polar residues" evidence="2">
    <location>
        <begin position="571"/>
        <end position="597"/>
    </location>
</feature>
<feature type="compositionally biased region" description="Low complexity" evidence="2">
    <location>
        <begin position="645"/>
        <end position="659"/>
    </location>
</feature>
<feature type="compositionally biased region" description="Polar residues" evidence="2">
    <location>
        <begin position="669"/>
        <end position="681"/>
    </location>
</feature>
<feature type="compositionally biased region" description="Polar residues" evidence="2">
    <location>
        <begin position="715"/>
        <end position="724"/>
    </location>
</feature>
<feature type="compositionally biased region" description="Low complexity" evidence="2">
    <location>
        <begin position="789"/>
        <end position="800"/>
    </location>
</feature>
<feature type="compositionally biased region" description="Low complexity" evidence="2">
    <location>
        <begin position="1042"/>
        <end position="1054"/>
    </location>
</feature>
<feature type="compositionally biased region" description="Polar residues" evidence="2">
    <location>
        <begin position="1066"/>
        <end position="1078"/>
    </location>
</feature>
<feature type="splice variant" id="VSP_039722" description="In isoform 2." evidence="3">
    <original>L</original>
    <variation>LDGTTSKSD</variation>
    <location>
        <position position="637"/>
    </location>
</feature>
<feature type="sequence conflict" description="In Ref. 1; AAY43788." evidence="4" ref="1">
    <original>T</original>
    <variation>A</variation>
    <location>
        <position position="586"/>
    </location>
</feature>
<gene>
    <name type="primary">clasp1-a</name>
    <name type="synonym">clasp</name>
</gene>
<sequence length="1460" mass="161499">MEQGMDYWLGQIQQKDVGKRLQVGPDLIEYLLDRQKSIDLEQDQTLLDRMVDGLATSWVNSSNYKVALLGMDILSELVSRLQDRFRTQLGTVLPSLMDRLGDAKDSVREQDQSLLIKIMEQASNPQYVWERMFSGFKHKNFRTREGVCLCLIATLNVYGANSLTLSKIVPHICNLLGDPNSQVRDAAINCLVEIYRHVGERVRADLSKKGLPQSRLNVIFTKFDEVQKSGTMILSASDKNFDDEDSVDGNRPSSASSSASSKAPQTARRGVSLGTARRPGPSSAAAKTGGTAKEGAGALDEEDFIRAFEDVPNVQIYSSRDLEESLNKIREILSDDKHDWEQRITALKKIRSLLLAGAAEYDNFFQQLRLLDGAFKLSAKDLRSQVVREACITLGHLSSVLGNKFDHGAEAIMPTVFNLVPNSAKIMATSGIVAIRLIIRHTHVPRLIPIITSNCTSKSVAVRRRCYDFLDLLLQEWQTHSLERHVSVLAETIKKGIHDADSEAKIVARKCYWGFHSHFSKEAEHLFHTLESSYQKALQSHLKNSDSIVSLPQSDRSSSSSQESLNRPLSTKRSPTGSTVSRASSTTSKSTPGSLQRSRSDIDVNAAATSKSKAASGASTAPFISVAALPPGSYASLGRIRTRRQSSGSTTSTASTPADTRGRSRAKVVSQSQPGSRSNSPGKLLGSSYGGIATGPQRVPQMPSSEKRSRIPRSQGCSRETSPSRIGLDRFGISQQGRIPSAMRVLSSSTDLEAAVADALLLGDSRNKKKPVRRRYEPYGMYSDDDANSDASSACSERSYSSKNGGIPHYLRQTEDVAEVLNHCASSNWSERKEGLLGLQNLLKSQRTLSRVELKRLCEIFTRMFADPHSKRVFSMFLETLVDFVIIHKDDLQDWLFILLTQLLKKMGADLLGSVQAKVQKALDVTRDSFPFDQQFNILMRFIVDQTQTPNLKVKVAILKYIESLARQMDPTDFVNSSETRLAVSRIITWTTEPKSSDVRKAAQIVLISLFELNTPEFTMLLGALPKTFQDGATKLLHNHLKNSSNSSMGSPSNTIGRTPSRHSSSRASPLTSPTNCSHGGLSPSMLDYDTENLNSDEIYSSLRGVTEAIEKFSFRSQVDLNEPVRRDSKKESELGSCDVGIASPASDLRGGTDMVEGGRMALDNKTSLLNTQPPRAFTGPRGREYNPYAYSDSINSYDKTALKEAVFDDDMDQLRDVSIDHSDLVADLLKELSNHNERVEERKGALCELLKITREDNLAVWEEHFKTILLLLLETLGDKDHAIRALALRVLREILRNQPARFKNYAELTIMKTLEAHKDSHKEVVRAAEEAASTLAGSIHPEQCIKVLCPIIQTADYPINLAAIKMQAKVIERISKESLHQILPDIIPGLLQGYDNTESSVRKASVFCLVAIYSVIGEELKPYLAQLTGSKMKLLNLYIKRAQTTNSNSSSSSDVSTHS</sequence>
<accession>Q4U0G1</accession>
<accession>A3KNB5</accession>
<comment type="function">
    <text evidence="1">Microtubule plus-end tracking protein that promotes the stabilization of dynamic microtubules during anaphase. Plays a crucial role in chromatin-induced microtubule formation. May also act at microtubule minus ends. May be involved in the nucleation of noncentrosomal microtubules originating from the trans-Golgi network (TGN) (By similarity).</text>
</comment>
<comment type="subcellular location">
    <subcellularLocation>
        <location evidence="1">Cytoplasm</location>
        <location evidence="1">Cytoskeleton</location>
    </subcellularLocation>
    <subcellularLocation>
        <location evidence="1">Cytoplasm</location>
        <location evidence="1">Cytoskeleton</location>
        <location evidence="1">Microtubule organizing center</location>
        <location evidence="1">Centrosome</location>
    </subcellularLocation>
    <subcellularLocation>
        <location evidence="1">Chromosome</location>
        <location evidence="1">Centromere</location>
        <location evidence="1">Kinetochore</location>
    </subcellularLocation>
    <subcellularLocation>
        <location evidence="1">Cytoplasm</location>
        <location evidence="1">Cytoskeleton</location>
        <location evidence="1">Spindle</location>
    </subcellularLocation>
    <subcellularLocation>
        <location evidence="1">Golgi apparatus</location>
        <location evidence="1">trans-Golgi network</location>
    </subcellularLocation>
    <text evidence="1">Localizes to microtubule plus ends.</text>
</comment>
<comment type="alternative products">
    <event type="alternative splicing"/>
    <isoform>
        <id>Q4U0G1-1</id>
        <name>1</name>
        <sequence type="displayed"/>
    </isoform>
    <isoform>
        <id>Q4U0G1-2</id>
        <name>2</name>
        <sequence type="described" ref="VSP_039722"/>
    </isoform>
</comment>
<comment type="similarity">
    <text evidence="4">Belongs to the CLASP family.</text>
</comment>
<name>CLA1A_XENLA</name>
<dbReference type="EMBL" id="DQ022563">
    <property type="protein sequence ID" value="AAY43788.1"/>
    <property type="molecule type" value="mRNA"/>
</dbReference>
<dbReference type="EMBL" id="BC133747">
    <property type="protein sequence ID" value="AAI33748.1"/>
    <property type="molecule type" value="mRNA"/>
</dbReference>
<dbReference type="RefSeq" id="NP_001088115.1">
    <property type="nucleotide sequence ID" value="NM_001094646.1"/>
</dbReference>
<dbReference type="SMR" id="Q4U0G1"/>
<dbReference type="IntAct" id="Q4U0G1">
    <property type="interactions" value="1"/>
</dbReference>
<dbReference type="GeneID" id="494817"/>
<dbReference type="KEGG" id="xla:494817"/>
<dbReference type="AGR" id="Xenbase:XB-GENE-6466086"/>
<dbReference type="CTD" id="494817"/>
<dbReference type="Xenbase" id="XB-GENE-6466086">
    <property type="gene designation" value="clasp1.L"/>
</dbReference>
<dbReference type="OrthoDB" id="46159at2759"/>
<dbReference type="Proteomes" id="UP000186698">
    <property type="component" value="Chromosome 9_10L"/>
</dbReference>
<dbReference type="Bgee" id="494817">
    <property type="expression patterns" value="Expressed in brain and 19 other cell types or tissues"/>
</dbReference>
<dbReference type="GO" id="GO:0045180">
    <property type="term" value="C:basal cortex"/>
    <property type="evidence" value="ECO:0000318"/>
    <property type="project" value="GO_Central"/>
</dbReference>
<dbReference type="GO" id="GO:0005813">
    <property type="term" value="C:centrosome"/>
    <property type="evidence" value="ECO:0007669"/>
    <property type="project" value="UniProtKB-SubCell"/>
</dbReference>
<dbReference type="GO" id="GO:0005881">
    <property type="term" value="C:cytoplasmic microtubule"/>
    <property type="evidence" value="ECO:0000318"/>
    <property type="project" value="GO_Central"/>
</dbReference>
<dbReference type="GO" id="GO:0005794">
    <property type="term" value="C:Golgi apparatus"/>
    <property type="evidence" value="ECO:0007669"/>
    <property type="project" value="UniProtKB-SubCell"/>
</dbReference>
<dbReference type="GO" id="GO:0000776">
    <property type="term" value="C:kinetochore"/>
    <property type="evidence" value="ECO:0000318"/>
    <property type="project" value="GO_Central"/>
</dbReference>
<dbReference type="GO" id="GO:0005815">
    <property type="term" value="C:microtubule organizing center"/>
    <property type="evidence" value="ECO:0000318"/>
    <property type="project" value="GO_Central"/>
</dbReference>
<dbReference type="GO" id="GO:0072686">
    <property type="term" value="C:mitotic spindle"/>
    <property type="evidence" value="ECO:0000318"/>
    <property type="project" value="GO_Central"/>
</dbReference>
<dbReference type="GO" id="GO:0005876">
    <property type="term" value="C:spindle microtubule"/>
    <property type="evidence" value="ECO:0000318"/>
    <property type="project" value="GO_Central"/>
</dbReference>
<dbReference type="GO" id="GO:0043515">
    <property type="term" value="F:kinetochore binding"/>
    <property type="evidence" value="ECO:0000318"/>
    <property type="project" value="GO_Central"/>
</dbReference>
<dbReference type="GO" id="GO:0008017">
    <property type="term" value="F:microtubule binding"/>
    <property type="evidence" value="ECO:0000318"/>
    <property type="project" value="GO_Central"/>
</dbReference>
<dbReference type="GO" id="GO:0051301">
    <property type="term" value="P:cell division"/>
    <property type="evidence" value="ECO:0007669"/>
    <property type="project" value="UniProtKB-KW"/>
</dbReference>
<dbReference type="GO" id="GO:0040001">
    <property type="term" value="P:establishment of mitotic spindle localization"/>
    <property type="evidence" value="ECO:0000318"/>
    <property type="project" value="GO_Central"/>
</dbReference>
<dbReference type="GO" id="GO:0034453">
    <property type="term" value="P:microtubule anchoring"/>
    <property type="evidence" value="ECO:0000250"/>
    <property type="project" value="UniProtKB"/>
</dbReference>
<dbReference type="GO" id="GO:0007020">
    <property type="term" value="P:microtubule nucleation"/>
    <property type="evidence" value="ECO:0000250"/>
    <property type="project" value="UniProtKB"/>
</dbReference>
<dbReference type="GO" id="GO:0031023">
    <property type="term" value="P:microtubule organizing center organization"/>
    <property type="evidence" value="ECO:0000250"/>
    <property type="project" value="UniProtKB"/>
</dbReference>
<dbReference type="GO" id="GO:0090307">
    <property type="term" value="P:mitotic spindle assembly"/>
    <property type="evidence" value="ECO:0000318"/>
    <property type="project" value="GO_Central"/>
</dbReference>
<dbReference type="GO" id="GO:0031110">
    <property type="term" value="P:regulation of microtubule polymerization or depolymerization"/>
    <property type="evidence" value="ECO:0007669"/>
    <property type="project" value="UniProtKB-ARBA"/>
</dbReference>
<dbReference type="GO" id="GO:1902903">
    <property type="term" value="P:regulation of supramolecular fiber organization"/>
    <property type="evidence" value="ECO:0007669"/>
    <property type="project" value="UniProtKB-ARBA"/>
</dbReference>
<dbReference type="FunFam" id="1.25.10.10:FF:000001">
    <property type="entry name" value="CLIP-associating protein 1 isoform 2"/>
    <property type="match status" value="1"/>
</dbReference>
<dbReference type="FunFam" id="1.25.10.10:FF:000005">
    <property type="entry name" value="CLIP-associating protein 1 isoform 2"/>
    <property type="match status" value="1"/>
</dbReference>
<dbReference type="FunFam" id="1.25.10.10:FF:000006">
    <property type="entry name" value="CLIP-associating protein 1 isoform 2"/>
    <property type="match status" value="1"/>
</dbReference>
<dbReference type="FunFam" id="1.25.10.10:FF:000031">
    <property type="entry name" value="CLIP-associating protein 1 isoform 2"/>
    <property type="match status" value="1"/>
</dbReference>
<dbReference type="Gene3D" id="1.25.10.10">
    <property type="entry name" value="Leucine-rich Repeat Variant"/>
    <property type="match status" value="4"/>
</dbReference>
<dbReference type="InterPro" id="IPR011989">
    <property type="entry name" value="ARM-like"/>
</dbReference>
<dbReference type="InterPro" id="IPR016024">
    <property type="entry name" value="ARM-type_fold"/>
</dbReference>
<dbReference type="InterPro" id="IPR024395">
    <property type="entry name" value="CLASP_N_dom"/>
</dbReference>
<dbReference type="InterPro" id="IPR021133">
    <property type="entry name" value="HEAT_type_2"/>
</dbReference>
<dbReference type="InterPro" id="IPR034085">
    <property type="entry name" value="TOG"/>
</dbReference>
<dbReference type="PANTHER" id="PTHR21567">
    <property type="entry name" value="CLASP"/>
    <property type="match status" value="1"/>
</dbReference>
<dbReference type="PANTHER" id="PTHR21567:SF28">
    <property type="entry name" value="CLIP-ASSOCIATING PROTEIN 1"/>
    <property type="match status" value="1"/>
</dbReference>
<dbReference type="Pfam" id="PF12348">
    <property type="entry name" value="CLASP_N"/>
    <property type="match status" value="2"/>
</dbReference>
<dbReference type="SMART" id="SM01349">
    <property type="entry name" value="TOG"/>
    <property type="match status" value="4"/>
</dbReference>
<dbReference type="SUPFAM" id="SSF48371">
    <property type="entry name" value="ARM repeat"/>
    <property type="match status" value="2"/>
</dbReference>
<dbReference type="PROSITE" id="PS50077">
    <property type="entry name" value="HEAT_REPEAT"/>
    <property type="match status" value="1"/>
</dbReference>
<protein>
    <recommendedName>
        <fullName>CLIP-associating protein 1-A</fullName>
    </recommendedName>
    <alternativeName>
        <fullName>Cytoplasmic linker-associated protein 1-A</fullName>
        <shortName>XCLASP1</shortName>
    </alternativeName>
</protein>
<evidence type="ECO:0000250" key="1"/>
<evidence type="ECO:0000256" key="2">
    <source>
        <dbReference type="SAM" id="MobiDB-lite"/>
    </source>
</evidence>
<evidence type="ECO:0000303" key="3">
    <source ref="1"/>
</evidence>
<evidence type="ECO:0000305" key="4"/>
<keyword id="KW-0025">Alternative splicing</keyword>
<keyword id="KW-0131">Cell cycle</keyword>
<keyword id="KW-0132">Cell division</keyword>
<keyword id="KW-0137">Centromere</keyword>
<keyword id="KW-0158">Chromosome</keyword>
<keyword id="KW-0963">Cytoplasm</keyword>
<keyword id="KW-0206">Cytoskeleton</keyword>
<keyword id="KW-0333">Golgi apparatus</keyword>
<keyword id="KW-0995">Kinetochore</keyword>
<keyword id="KW-0493">Microtubule</keyword>
<keyword id="KW-0498">Mitosis</keyword>
<keyword id="KW-1185">Reference proteome</keyword>
<keyword id="KW-0677">Repeat</keyword>